<reference key="1">
    <citation type="journal article" date="2006" name="J. Bacteriol.">
        <title>Genome sequence of Aeromonas hydrophila ATCC 7966T: jack of all trades.</title>
        <authorList>
            <person name="Seshadri R."/>
            <person name="Joseph S.W."/>
            <person name="Chopra A.K."/>
            <person name="Sha J."/>
            <person name="Shaw J."/>
            <person name="Graf J."/>
            <person name="Haft D.H."/>
            <person name="Wu M."/>
            <person name="Ren Q."/>
            <person name="Rosovitz M.J."/>
            <person name="Madupu R."/>
            <person name="Tallon L."/>
            <person name="Kim M."/>
            <person name="Jin S."/>
            <person name="Vuong H."/>
            <person name="Stine O.C."/>
            <person name="Ali A."/>
            <person name="Horneman A.J."/>
            <person name="Heidelberg J.F."/>
        </authorList>
    </citation>
    <scope>NUCLEOTIDE SEQUENCE [LARGE SCALE GENOMIC DNA]</scope>
    <source>
        <strain>ATCC 7966 / DSM 30187 / BCRC 13018 / CCUG 14551 / JCM 1027 / KCTC 2358 / NCIMB 9240 / NCTC 8049</strain>
    </source>
</reference>
<comment type="function">
    <text evidence="1">Synthesizes selenophosphate from selenide and ATP.</text>
</comment>
<comment type="catalytic activity">
    <reaction evidence="1">
        <text>hydrogenselenide + ATP + H2O = selenophosphate + AMP + phosphate + 2 H(+)</text>
        <dbReference type="Rhea" id="RHEA:18737"/>
        <dbReference type="ChEBI" id="CHEBI:15377"/>
        <dbReference type="ChEBI" id="CHEBI:15378"/>
        <dbReference type="ChEBI" id="CHEBI:16144"/>
        <dbReference type="ChEBI" id="CHEBI:29317"/>
        <dbReference type="ChEBI" id="CHEBI:30616"/>
        <dbReference type="ChEBI" id="CHEBI:43474"/>
        <dbReference type="ChEBI" id="CHEBI:456215"/>
        <dbReference type="EC" id="2.7.9.3"/>
    </reaction>
</comment>
<comment type="cofactor">
    <cofactor evidence="1">
        <name>Mg(2+)</name>
        <dbReference type="ChEBI" id="CHEBI:18420"/>
    </cofactor>
    <text evidence="1">Binds 1 Mg(2+) ion per monomer.</text>
</comment>
<comment type="subunit">
    <text evidence="1">Homodimer.</text>
</comment>
<comment type="similarity">
    <text evidence="1">Belongs to the selenophosphate synthase 1 family. Class I subfamily.</text>
</comment>
<keyword id="KW-0067">ATP-binding</keyword>
<keyword id="KW-0418">Kinase</keyword>
<keyword id="KW-0460">Magnesium</keyword>
<keyword id="KW-0479">Metal-binding</keyword>
<keyword id="KW-0547">Nucleotide-binding</keyword>
<keyword id="KW-1185">Reference proteome</keyword>
<keyword id="KW-0711">Selenium</keyword>
<keyword id="KW-0808">Transferase</keyword>
<feature type="chain" id="PRO_0000318663" description="Selenide, water dikinase">
    <location>
        <begin position="1"/>
        <end position="345"/>
    </location>
</feature>
<feature type="active site" evidence="1">
    <location>
        <position position="15"/>
    </location>
</feature>
<feature type="binding site" description="in other chain" evidence="1">
    <location>
        <position position="18"/>
    </location>
    <ligand>
        <name>ATP</name>
        <dbReference type="ChEBI" id="CHEBI:30616"/>
        <note>ligand shared between dimeric partners</note>
    </ligand>
</feature>
<feature type="binding site" description="in other chain" evidence="1">
    <location>
        <begin position="46"/>
        <end position="48"/>
    </location>
    <ligand>
        <name>ATP</name>
        <dbReference type="ChEBI" id="CHEBI:30616"/>
        <note>ligand shared between dimeric partners</note>
    </ligand>
</feature>
<feature type="binding site" evidence="1">
    <location>
        <position position="49"/>
    </location>
    <ligand>
        <name>Mg(2+)</name>
        <dbReference type="ChEBI" id="CHEBI:18420"/>
    </ligand>
</feature>
<feature type="binding site" description="in other chain" evidence="1">
    <location>
        <position position="66"/>
    </location>
    <ligand>
        <name>ATP</name>
        <dbReference type="ChEBI" id="CHEBI:30616"/>
        <note>ligand shared between dimeric partners</note>
    </ligand>
</feature>
<feature type="binding site" description="in other chain" evidence="1">
    <location>
        <position position="89"/>
    </location>
    <ligand>
        <name>ATP</name>
        <dbReference type="ChEBI" id="CHEBI:30616"/>
        <note>ligand shared between dimeric partners</note>
    </ligand>
</feature>
<feature type="binding site" evidence="1">
    <location>
        <position position="89"/>
    </location>
    <ligand>
        <name>Mg(2+)</name>
        <dbReference type="ChEBI" id="CHEBI:18420"/>
    </ligand>
</feature>
<feature type="binding site" evidence="1">
    <location>
        <begin position="137"/>
        <end position="139"/>
    </location>
    <ligand>
        <name>ATP</name>
        <dbReference type="ChEBI" id="CHEBI:30616"/>
        <note>ligand shared between dimeric partners</note>
    </ligand>
</feature>
<feature type="binding site" evidence="1">
    <location>
        <position position="225"/>
    </location>
    <ligand>
        <name>Mg(2+)</name>
        <dbReference type="ChEBI" id="CHEBI:18420"/>
    </ligand>
</feature>
<feature type="site" description="Important for catalytic activity" evidence="1">
    <location>
        <position position="18"/>
    </location>
</feature>
<gene>
    <name evidence="1" type="primary">selD</name>
    <name type="ordered locus">AHA_2224</name>
</gene>
<protein>
    <recommendedName>
        <fullName evidence="1">Selenide, water dikinase</fullName>
        <ecNumber evidence="1">2.7.9.3</ecNumber>
    </recommendedName>
    <alternativeName>
        <fullName evidence="1">Selenium donor protein</fullName>
    </alternativeName>
    <alternativeName>
        <fullName evidence="1">Selenophosphate synthase</fullName>
    </alternativeName>
</protein>
<evidence type="ECO:0000255" key="1">
    <source>
        <dbReference type="HAMAP-Rule" id="MF_00625"/>
    </source>
</evidence>
<accession>A0KKE7</accession>
<sequence length="345" mass="36158">MSSIRLTQYSHGAGCGCKISPKVLDTILKSQIPGFDDPTLVVGNSSKDDAAVVDIGNGQGIVSTTDFFMPIVDDPFTFGRIAATNAISDIYAMGGKPIVAIAILGWPINTLAPEVAQQVIDGGRQVCHEAGISLAGGHSIDAPEPIFGLAVTGIVPLDAIKQNDTAKVGDTLYLTKPLGIGILTTAQKKGKLKPEHEQLAPNAMCTLNKIGQRFAELPGVHAMTDVTGFGLAGHLLEMCEGSGVSARLDFKALPLLDEVDYYLSEGCVPGGTLRNFDSYGDKLDAMDDRTRNILCDPQTSGGLLVAVGKESEAELLAIAAQAGLTLSPIGQLQARTGNQFIEVVQ</sequence>
<dbReference type="EC" id="2.7.9.3" evidence="1"/>
<dbReference type="EMBL" id="CP000462">
    <property type="protein sequence ID" value="ABK38888.1"/>
    <property type="molecule type" value="Genomic_DNA"/>
</dbReference>
<dbReference type="RefSeq" id="WP_011706081.1">
    <property type="nucleotide sequence ID" value="NC_008570.1"/>
</dbReference>
<dbReference type="RefSeq" id="YP_856748.1">
    <property type="nucleotide sequence ID" value="NC_008570.1"/>
</dbReference>
<dbReference type="SMR" id="A0KKE7"/>
<dbReference type="STRING" id="380703.AHA_2224"/>
<dbReference type="EnsemblBacteria" id="ABK38888">
    <property type="protein sequence ID" value="ABK38888"/>
    <property type="gene ID" value="AHA_2224"/>
</dbReference>
<dbReference type="GeneID" id="4489574"/>
<dbReference type="KEGG" id="aha:AHA_2224"/>
<dbReference type="PATRIC" id="fig|380703.7.peg.2225"/>
<dbReference type="eggNOG" id="COG0709">
    <property type="taxonomic scope" value="Bacteria"/>
</dbReference>
<dbReference type="HOGENOM" id="CLU_032859_0_1_6"/>
<dbReference type="OrthoDB" id="9767928at2"/>
<dbReference type="Proteomes" id="UP000000756">
    <property type="component" value="Chromosome"/>
</dbReference>
<dbReference type="GO" id="GO:0005737">
    <property type="term" value="C:cytoplasm"/>
    <property type="evidence" value="ECO:0007669"/>
    <property type="project" value="TreeGrafter"/>
</dbReference>
<dbReference type="GO" id="GO:0005524">
    <property type="term" value="F:ATP binding"/>
    <property type="evidence" value="ECO:0007669"/>
    <property type="project" value="UniProtKB-UniRule"/>
</dbReference>
<dbReference type="GO" id="GO:0000287">
    <property type="term" value="F:magnesium ion binding"/>
    <property type="evidence" value="ECO:0007669"/>
    <property type="project" value="UniProtKB-UniRule"/>
</dbReference>
<dbReference type="GO" id="GO:0004756">
    <property type="term" value="F:selenide, water dikinase activity"/>
    <property type="evidence" value="ECO:0007669"/>
    <property type="project" value="UniProtKB-UniRule"/>
</dbReference>
<dbReference type="GO" id="GO:0016260">
    <property type="term" value="P:selenocysteine biosynthetic process"/>
    <property type="evidence" value="ECO:0007669"/>
    <property type="project" value="InterPro"/>
</dbReference>
<dbReference type="CDD" id="cd02195">
    <property type="entry name" value="SelD"/>
    <property type="match status" value="1"/>
</dbReference>
<dbReference type="FunFam" id="3.30.1330.10:FF:000003">
    <property type="entry name" value="Selenide, water dikinase"/>
    <property type="match status" value="1"/>
</dbReference>
<dbReference type="FunFam" id="3.90.650.10:FF:000004">
    <property type="entry name" value="Selenide, water dikinase"/>
    <property type="match status" value="1"/>
</dbReference>
<dbReference type="Gene3D" id="3.90.650.10">
    <property type="entry name" value="PurM-like C-terminal domain"/>
    <property type="match status" value="1"/>
</dbReference>
<dbReference type="Gene3D" id="3.30.1330.10">
    <property type="entry name" value="PurM-like, N-terminal domain"/>
    <property type="match status" value="1"/>
</dbReference>
<dbReference type="HAMAP" id="MF_00625">
    <property type="entry name" value="SelD"/>
    <property type="match status" value="1"/>
</dbReference>
<dbReference type="InterPro" id="IPR010918">
    <property type="entry name" value="PurM-like_C_dom"/>
</dbReference>
<dbReference type="InterPro" id="IPR036676">
    <property type="entry name" value="PurM-like_C_sf"/>
</dbReference>
<dbReference type="InterPro" id="IPR016188">
    <property type="entry name" value="PurM-like_N"/>
</dbReference>
<dbReference type="InterPro" id="IPR036921">
    <property type="entry name" value="PurM-like_N_sf"/>
</dbReference>
<dbReference type="InterPro" id="IPR023061">
    <property type="entry name" value="SelD_I"/>
</dbReference>
<dbReference type="InterPro" id="IPR004536">
    <property type="entry name" value="SPS/SelD"/>
</dbReference>
<dbReference type="NCBIfam" id="NF002098">
    <property type="entry name" value="PRK00943.1"/>
    <property type="match status" value="1"/>
</dbReference>
<dbReference type="NCBIfam" id="TIGR00476">
    <property type="entry name" value="selD"/>
    <property type="match status" value="1"/>
</dbReference>
<dbReference type="PANTHER" id="PTHR10256:SF0">
    <property type="entry name" value="INACTIVE SELENIDE, WATER DIKINASE-LIKE PROTEIN-RELATED"/>
    <property type="match status" value="1"/>
</dbReference>
<dbReference type="PANTHER" id="PTHR10256">
    <property type="entry name" value="SELENIDE, WATER DIKINASE"/>
    <property type="match status" value="1"/>
</dbReference>
<dbReference type="Pfam" id="PF00586">
    <property type="entry name" value="AIRS"/>
    <property type="match status" value="1"/>
</dbReference>
<dbReference type="Pfam" id="PF02769">
    <property type="entry name" value="AIRS_C"/>
    <property type="match status" value="1"/>
</dbReference>
<dbReference type="PIRSF" id="PIRSF036407">
    <property type="entry name" value="Selenphspht_syn"/>
    <property type="match status" value="1"/>
</dbReference>
<dbReference type="SUPFAM" id="SSF56042">
    <property type="entry name" value="PurM C-terminal domain-like"/>
    <property type="match status" value="1"/>
</dbReference>
<dbReference type="SUPFAM" id="SSF55326">
    <property type="entry name" value="PurM N-terminal domain-like"/>
    <property type="match status" value="1"/>
</dbReference>
<name>SELD_AERHH</name>
<proteinExistence type="inferred from homology"/>
<organism>
    <name type="scientific">Aeromonas hydrophila subsp. hydrophila (strain ATCC 7966 / DSM 30187 / BCRC 13018 / CCUG 14551 / JCM 1027 / KCTC 2358 / NCIMB 9240 / NCTC 8049)</name>
    <dbReference type="NCBI Taxonomy" id="380703"/>
    <lineage>
        <taxon>Bacteria</taxon>
        <taxon>Pseudomonadati</taxon>
        <taxon>Pseudomonadota</taxon>
        <taxon>Gammaproteobacteria</taxon>
        <taxon>Aeromonadales</taxon>
        <taxon>Aeromonadaceae</taxon>
        <taxon>Aeromonas</taxon>
    </lineage>
</organism>